<gene>
    <name type="primary">CHI</name>
    <name type="synonym">CHI-1</name>
</gene>
<reference key="1">
    <citation type="journal article" date="2005" name="FEBS Lett.">
        <title>Flavonoid components and flower color change in transgenic tobacco plants by suppression of chalcone isomerase gene.</title>
        <authorList>
            <person name="Nishihara M."/>
            <person name="Nakatsuka T."/>
            <person name="Yamamura S."/>
        </authorList>
    </citation>
    <scope>NUCLEOTIDE SEQUENCE [MRNA]</scope>
    <scope>FUNCTION</scope>
    <source>
        <strain>cv. SR1</strain>
        <tissue>Petal</tissue>
    </source>
</reference>
<dbReference type="EC" id="5.5.1.6"/>
<dbReference type="EMBL" id="AB213651">
    <property type="protein sequence ID" value="BAE48085.1"/>
    <property type="molecule type" value="mRNA"/>
</dbReference>
<dbReference type="RefSeq" id="NP_001312216.1">
    <property type="nucleotide sequence ID" value="NM_001325287.1"/>
</dbReference>
<dbReference type="SMR" id="Q33DL3"/>
<dbReference type="STRING" id="4097.Q33DL3"/>
<dbReference type="PaxDb" id="4097-Q33DL3"/>
<dbReference type="GeneID" id="107779699"/>
<dbReference type="KEGG" id="nta:107779699"/>
<dbReference type="OMA" id="FNDCGVD"/>
<dbReference type="OrthoDB" id="1903537at2759"/>
<dbReference type="PhylomeDB" id="Q33DL3"/>
<dbReference type="BRENDA" id="5.5.1.6">
    <property type="organism ID" value="3645"/>
</dbReference>
<dbReference type="UniPathway" id="UPA00154"/>
<dbReference type="Proteomes" id="UP000084051">
    <property type="component" value="Unplaced"/>
</dbReference>
<dbReference type="GO" id="GO:0045430">
    <property type="term" value="F:chalcone isomerase activity"/>
    <property type="evidence" value="ECO:0007669"/>
    <property type="project" value="UniProtKB-EC"/>
</dbReference>
<dbReference type="GO" id="GO:0009813">
    <property type="term" value="P:flavonoid biosynthetic process"/>
    <property type="evidence" value="ECO:0007669"/>
    <property type="project" value="UniProtKB-UniPathway"/>
</dbReference>
<dbReference type="Gene3D" id="1.10.890.20">
    <property type="match status" value="1"/>
</dbReference>
<dbReference type="Gene3D" id="3.50.70.10">
    <property type="match status" value="1"/>
</dbReference>
<dbReference type="InterPro" id="IPR044164">
    <property type="entry name" value="CFI"/>
</dbReference>
<dbReference type="InterPro" id="IPR016087">
    <property type="entry name" value="Chalcone_isomerase"/>
</dbReference>
<dbReference type="InterPro" id="IPR016088">
    <property type="entry name" value="Chalcone_isomerase_3-sand"/>
</dbReference>
<dbReference type="InterPro" id="IPR016089">
    <property type="entry name" value="Chalcone_isomerase_bundle_sf"/>
</dbReference>
<dbReference type="InterPro" id="IPR036298">
    <property type="entry name" value="Chalcone_isomerase_sf"/>
</dbReference>
<dbReference type="PANTHER" id="PTHR28039:SF8">
    <property type="entry name" value="CHALCONE--FLAVANONE ISOMERASE 1-RELATED"/>
    <property type="match status" value="1"/>
</dbReference>
<dbReference type="PANTHER" id="PTHR28039">
    <property type="entry name" value="CHALCONE--FLAVONONE ISOMERASE 1-RELATED"/>
    <property type="match status" value="1"/>
</dbReference>
<dbReference type="Pfam" id="PF02431">
    <property type="entry name" value="Chalcone"/>
    <property type="match status" value="1"/>
</dbReference>
<dbReference type="SUPFAM" id="SSF54626">
    <property type="entry name" value="Chalcone isomerase"/>
    <property type="match status" value="1"/>
</dbReference>
<sequence>MESITIENYVFPSTMVNPPGSTNTFFLAGAGNRGLEIEGKFVKFTAIGVYLEESALPFLAAKWKSKSSEELANSLDFFRDIVTGPFEKFTRVTMILPLTGKQYSEKVAENCVAHWKAIGTYTDAESQAIEKLLNIFQNETFPPGASILFTQSPVGALTISFIKDDSITGTGNAVIENKQLSEAVLESIIGKHGVSPAAKCSIAERVSGLFKKSYADASVFEKPGIEKSSDPVIEEKPTIPEIGV</sequence>
<name>CFI_TOBAC</name>
<comment type="function">
    <text evidence="2">Catalyzes the intramolecular cyclization of bicyclic chalcones into tricyclic (S)-flavanones. Responsible for the isomerization of 4,2',4',6'-tetrahydroxychalcone (also termed chalcone) into naringenin.</text>
</comment>
<comment type="catalytic activity">
    <reaction>
        <text>a chalcone = a flavanone.</text>
        <dbReference type="EC" id="5.5.1.6"/>
    </reaction>
</comment>
<comment type="pathway">
    <text>Secondary metabolite biosynthesis; flavonoid biosynthesis.</text>
</comment>
<comment type="miscellaneous">
    <text>Part of the biosynthetic pathway for all classes of flavonoids, a large class of secondary plant metabolites, many of which are brightly colored.</text>
</comment>
<comment type="similarity">
    <text evidence="3">Belongs to the chalcone isomerase family.</text>
</comment>
<protein>
    <recommendedName>
        <fullName>Chalcone--flavanone isomerase</fullName>
        <shortName>Chalcone isomerase</shortName>
        <ecNumber>5.5.1.6</ecNumber>
    </recommendedName>
</protein>
<feature type="chain" id="PRO_0000300854" description="Chalcone--flavanone isomerase">
    <location>
        <begin position="1"/>
        <end position="244"/>
    </location>
</feature>
<feature type="binding site" evidence="1">
    <location>
        <position position="45"/>
    </location>
    <ligand>
        <name>substrate</name>
    </ligand>
</feature>
<feature type="binding site" evidence="1">
    <location>
        <position position="110"/>
    </location>
    <ligand>
        <name>substrate</name>
    </ligand>
</feature>
<feature type="binding site" evidence="1">
    <location>
        <position position="187"/>
    </location>
    <ligand>
        <name>substrate</name>
    </ligand>
</feature>
<feature type="site" description="Important for catalytic activity" evidence="1">
    <location>
        <position position="103"/>
    </location>
</feature>
<organism>
    <name type="scientific">Nicotiana tabacum</name>
    <name type="common">Common tobacco</name>
    <dbReference type="NCBI Taxonomy" id="4097"/>
    <lineage>
        <taxon>Eukaryota</taxon>
        <taxon>Viridiplantae</taxon>
        <taxon>Streptophyta</taxon>
        <taxon>Embryophyta</taxon>
        <taxon>Tracheophyta</taxon>
        <taxon>Spermatophyta</taxon>
        <taxon>Magnoliopsida</taxon>
        <taxon>eudicotyledons</taxon>
        <taxon>Gunneridae</taxon>
        <taxon>Pentapetalae</taxon>
        <taxon>asterids</taxon>
        <taxon>lamiids</taxon>
        <taxon>Solanales</taxon>
        <taxon>Solanaceae</taxon>
        <taxon>Nicotianoideae</taxon>
        <taxon>Nicotianeae</taxon>
        <taxon>Nicotiana</taxon>
    </lineage>
</organism>
<keyword id="KW-0284">Flavonoid biosynthesis</keyword>
<keyword id="KW-0413">Isomerase</keyword>
<keyword id="KW-1185">Reference proteome</keyword>
<evidence type="ECO:0000250" key="1"/>
<evidence type="ECO:0000269" key="2">
    <source>
    </source>
</evidence>
<evidence type="ECO:0000305" key="3"/>
<accession>Q33DL3</accession>
<proteinExistence type="evidence at transcript level"/>